<accession>P21680</accession>
<feature type="chain" id="PRO_0000165295" description="Protein dhr">
    <location>
        <begin position="1"/>
        <end position="66"/>
    </location>
</feature>
<keyword id="KW-0244">Early protein</keyword>
<keyword id="KW-1185">Reference proteome</keyword>
<protein>
    <recommendedName>
        <fullName>Protein dhr</fullName>
    </recommendedName>
</protein>
<dbReference type="EMBL" id="X15001">
    <property type="protein sequence ID" value="CAA33108.1"/>
    <property type="molecule type" value="Genomic_DNA"/>
</dbReference>
<dbReference type="EMBL" id="U32222">
    <property type="protein sequence ID" value="AAC34180.1"/>
    <property type="molecule type" value="Genomic_DNA"/>
</dbReference>
<dbReference type="PIR" id="S03595">
    <property type="entry name" value="S03595"/>
</dbReference>
<dbReference type="RefSeq" id="NP_052283.1">
    <property type="nucleotide sequence ID" value="NC_001317.1"/>
</dbReference>
<dbReference type="SMR" id="P21680"/>
<dbReference type="GeneID" id="1262464"/>
<dbReference type="KEGG" id="vg:1262464"/>
<dbReference type="OrthoDB" id="35561at10239"/>
<dbReference type="Proteomes" id="UP000000369">
    <property type="component" value="Segment"/>
</dbReference>
<gene>
    <name type="primary">dhr</name>
    <name type="synonym">CP78</name>
</gene>
<sequence length="66" mass="7531">MSRDELRIVLGAMIPNMEEGFEIKTRDGAILRVDPEWECCKEFKDGLKAEIIKQLKSKPAVVFGYS</sequence>
<reference key="1">
    <citation type="journal article" date="1989" name="J. Mol. Biol.">
        <title>Control of gene expression in the P2-related temperate coliphage 186. VI. Sequence analysis of the early lytic region.</title>
        <authorList>
            <person name="Richardson H."/>
            <person name="Puspurs A."/>
            <person name="Egan J.B."/>
        </authorList>
    </citation>
    <scope>NUCLEOTIDE SEQUENCE [GENOMIC DNA]</scope>
</reference>
<reference key="2">
    <citation type="journal article" date="1989" name="J. Mol. Biol.">
        <title>DNA replication studies with coliphage 186. II. Depression of host replication by a 186 gene.</title>
        <authorList>
            <person name="Richardson H."/>
            <person name="Egan J.B."/>
        </authorList>
    </citation>
    <scope>CHARACTERIZATION</scope>
</reference>
<comment type="function">
    <text>Involved in the depression of host DNA replication.</text>
</comment>
<proteinExistence type="evidence at protein level"/>
<name>VDHR_BP186</name>
<organism>
    <name type="scientific">Escherichia phage 186</name>
    <name type="common">Bacteriophage 186</name>
    <dbReference type="NCBI Taxonomy" id="29252"/>
    <lineage>
        <taxon>Viruses</taxon>
        <taxon>Duplodnaviria</taxon>
        <taxon>Heunggongvirae</taxon>
        <taxon>Uroviricota</taxon>
        <taxon>Caudoviricetes</taxon>
        <taxon>Peduoviridae</taxon>
        <taxon>Eganvirus</taxon>
    </lineage>
</organism>
<organismHost>
    <name type="scientific">Escherichia coli</name>
    <dbReference type="NCBI Taxonomy" id="562"/>
</organismHost>